<accession>Q0AV47</accession>
<gene>
    <name evidence="1" type="primary">rnhA</name>
    <name type="ordered locus">Swol_2115</name>
</gene>
<proteinExistence type="inferred from homology"/>
<keyword id="KW-0963">Cytoplasm</keyword>
<keyword id="KW-0255">Endonuclease</keyword>
<keyword id="KW-0378">Hydrolase</keyword>
<keyword id="KW-0460">Magnesium</keyword>
<keyword id="KW-0479">Metal-binding</keyword>
<keyword id="KW-0540">Nuclease</keyword>
<keyword id="KW-1185">Reference proteome</keyword>
<feature type="chain" id="PRO_0000332682" description="Ribonuclease H">
    <location>
        <begin position="1"/>
        <end position="146"/>
    </location>
</feature>
<feature type="domain" description="RNase H type-1" evidence="2">
    <location>
        <begin position="1"/>
        <end position="143"/>
    </location>
</feature>
<feature type="binding site" evidence="1">
    <location>
        <position position="9"/>
    </location>
    <ligand>
        <name>Mg(2+)</name>
        <dbReference type="ChEBI" id="CHEBI:18420"/>
        <label>1</label>
    </ligand>
</feature>
<feature type="binding site" evidence="1">
    <location>
        <position position="9"/>
    </location>
    <ligand>
        <name>Mg(2+)</name>
        <dbReference type="ChEBI" id="CHEBI:18420"/>
        <label>2</label>
    </ligand>
</feature>
<feature type="binding site" evidence="1">
    <location>
        <position position="47"/>
    </location>
    <ligand>
        <name>Mg(2+)</name>
        <dbReference type="ChEBI" id="CHEBI:18420"/>
        <label>1</label>
    </ligand>
</feature>
<feature type="binding site" evidence="1">
    <location>
        <position position="70"/>
    </location>
    <ligand>
        <name>Mg(2+)</name>
        <dbReference type="ChEBI" id="CHEBI:18420"/>
        <label>1</label>
    </ligand>
</feature>
<feature type="binding site" evidence="1">
    <location>
        <position position="135"/>
    </location>
    <ligand>
        <name>Mg(2+)</name>
        <dbReference type="ChEBI" id="CHEBI:18420"/>
        <label>2</label>
    </ligand>
</feature>
<sequence length="146" mass="16400">MKEIIIYTDGACSGNPGPGGWGAVLAYGEHQKEIAGAEADTTNQRMELMAVIEALKAIKGSGWEIRVYSDSAYFINAIQKGWLENWQRNGWKNSKKEDVANQDLWKALIPLLRKNRVRVEKVKGHSGDRWNERCDQLARNAIKSLG</sequence>
<reference key="1">
    <citation type="journal article" date="2010" name="Environ. Microbiol.">
        <title>The genome of Syntrophomonas wolfei: new insights into syntrophic metabolism and biohydrogen production.</title>
        <authorList>
            <person name="Sieber J.R."/>
            <person name="Sims D.R."/>
            <person name="Han C."/>
            <person name="Kim E."/>
            <person name="Lykidis A."/>
            <person name="Lapidus A.L."/>
            <person name="McDonnald E."/>
            <person name="Rohlin L."/>
            <person name="Culley D.E."/>
            <person name="Gunsalus R."/>
            <person name="McInerney M.J."/>
        </authorList>
    </citation>
    <scope>NUCLEOTIDE SEQUENCE [LARGE SCALE GENOMIC DNA]</scope>
    <source>
        <strain>DSM 2245B / Goettingen</strain>
    </source>
</reference>
<comment type="function">
    <text evidence="1">Endonuclease that specifically degrades the RNA of RNA-DNA hybrids.</text>
</comment>
<comment type="catalytic activity">
    <reaction evidence="1">
        <text>Endonucleolytic cleavage to 5'-phosphomonoester.</text>
        <dbReference type="EC" id="3.1.26.4"/>
    </reaction>
</comment>
<comment type="cofactor">
    <cofactor evidence="1">
        <name>Mg(2+)</name>
        <dbReference type="ChEBI" id="CHEBI:18420"/>
    </cofactor>
    <text evidence="1">Binds 1 Mg(2+) ion per subunit. May bind a second metal ion at a regulatory site, or after substrate binding.</text>
</comment>
<comment type="subunit">
    <text evidence="1">Monomer.</text>
</comment>
<comment type="subcellular location">
    <subcellularLocation>
        <location evidence="1">Cytoplasm</location>
    </subcellularLocation>
</comment>
<comment type="similarity">
    <text evidence="1">Belongs to the RNase H family.</text>
</comment>
<protein>
    <recommendedName>
        <fullName evidence="1">Ribonuclease H</fullName>
        <shortName evidence="1">RNase H</shortName>
        <ecNumber evidence="1">3.1.26.4</ecNumber>
    </recommendedName>
</protein>
<dbReference type="EC" id="3.1.26.4" evidence="1"/>
<dbReference type="EMBL" id="CP000448">
    <property type="protein sequence ID" value="ABI69407.1"/>
    <property type="molecule type" value="Genomic_DNA"/>
</dbReference>
<dbReference type="RefSeq" id="WP_011641498.1">
    <property type="nucleotide sequence ID" value="NC_008346.1"/>
</dbReference>
<dbReference type="SMR" id="Q0AV47"/>
<dbReference type="STRING" id="335541.Swol_2115"/>
<dbReference type="KEGG" id="swo:Swol_2115"/>
<dbReference type="eggNOG" id="COG0328">
    <property type="taxonomic scope" value="Bacteria"/>
</dbReference>
<dbReference type="HOGENOM" id="CLU_030894_6_2_9"/>
<dbReference type="OrthoDB" id="7845843at2"/>
<dbReference type="Proteomes" id="UP000001968">
    <property type="component" value="Chromosome"/>
</dbReference>
<dbReference type="GO" id="GO:0005737">
    <property type="term" value="C:cytoplasm"/>
    <property type="evidence" value="ECO:0007669"/>
    <property type="project" value="UniProtKB-SubCell"/>
</dbReference>
<dbReference type="GO" id="GO:0000287">
    <property type="term" value="F:magnesium ion binding"/>
    <property type="evidence" value="ECO:0007669"/>
    <property type="project" value="UniProtKB-UniRule"/>
</dbReference>
<dbReference type="GO" id="GO:0003676">
    <property type="term" value="F:nucleic acid binding"/>
    <property type="evidence" value="ECO:0007669"/>
    <property type="project" value="InterPro"/>
</dbReference>
<dbReference type="GO" id="GO:0004523">
    <property type="term" value="F:RNA-DNA hybrid ribonuclease activity"/>
    <property type="evidence" value="ECO:0007669"/>
    <property type="project" value="UniProtKB-UniRule"/>
</dbReference>
<dbReference type="GO" id="GO:0043137">
    <property type="term" value="P:DNA replication, removal of RNA primer"/>
    <property type="evidence" value="ECO:0007669"/>
    <property type="project" value="TreeGrafter"/>
</dbReference>
<dbReference type="CDD" id="cd09278">
    <property type="entry name" value="RNase_HI_prokaryote_like"/>
    <property type="match status" value="1"/>
</dbReference>
<dbReference type="FunFam" id="3.30.420.10:FF:000089">
    <property type="entry name" value="Ribonuclease H"/>
    <property type="match status" value="1"/>
</dbReference>
<dbReference type="Gene3D" id="3.30.420.10">
    <property type="entry name" value="Ribonuclease H-like superfamily/Ribonuclease H"/>
    <property type="match status" value="1"/>
</dbReference>
<dbReference type="HAMAP" id="MF_00042">
    <property type="entry name" value="RNase_H"/>
    <property type="match status" value="1"/>
</dbReference>
<dbReference type="InterPro" id="IPR050092">
    <property type="entry name" value="RNase_H"/>
</dbReference>
<dbReference type="InterPro" id="IPR012337">
    <property type="entry name" value="RNaseH-like_sf"/>
</dbReference>
<dbReference type="InterPro" id="IPR002156">
    <property type="entry name" value="RNaseH_domain"/>
</dbReference>
<dbReference type="InterPro" id="IPR036397">
    <property type="entry name" value="RNaseH_sf"/>
</dbReference>
<dbReference type="InterPro" id="IPR022892">
    <property type="entry name" value="RNaseHI"/>
</dbReference>
<dbReference type="NCBIfam" id="NF001236">
    <property type="entry name" value="PRK00203.1"/>
    <property type="match status" value="1"/>
</dbReference>
<dbReference type="PANTHER" id="PTHR10642">
    <property type="entry name" value="RIBONUCLEASE H1"/>
    <property type="match status" value="1"/>
</dbReference>
<dbReference type="PANTHER" id="PTHR10642:SF26">
    <property type="entry name" value="RIBONUCLEASE H1"/>
    <property type="match status" value="1"/>
</dbReference>
<dbReference type="Pfam" id="PF00075">
    <property type="entry name" value="RNase_H"/>
    <property type="match status" value="1"/>
</dbReference>
<dbReference type="SUPFAM" id="SSF53098">
    <property type="entry name" value="Ribonuclease H-like"/>
    <property type="match status" value="1"/>
</dbReference>
<dbReference type="PROSITE" id="PS50879">
    <property type="entry name" value="RNASE_H_1"/>
    <property type="match status" value="1"/>
</dbReference>
<name>RNH_SYNWW</name>
<evidence type="ECO:0000255" key="1">
    <source>
        <dbReference type="HAMAP-Rule" id="MF_00042"/>
    </source>
</evidence>
<evidence type="ECO:0000255" key="2">
    <source>
        <dbReference type="PROSITE-ProRule" id="PRU00408"/>
    </source>
</evidence>
<organism>
    <name type="scientific">Syntrophomonas wolfei subsp. wolfei (strain DSM 2245B / Goettingen)</name>
    <dbReference type="NCBI Taxonomy" id="335541"/>
    <lineage>
        <taxon>Bacteria</taxon>
        <taxon>Bacillati</taxon>
        <taxon>Bacillota</taxon>
        <taxon>Clostridia</taxon>
        <taxon>Eubacteriales</taxon>
        <taxon>Syntrophomonadaceae</taxon>
        <taxon>Syntrophomonas</taxon>
    </lineage>
</organism>